<comment type="function">
    <text evidence="1">Catalyzes the reversible interconversion of serine and glycine with tetrahydrofolate (THF) serving as the one-carbon carrier. This reaction serves as the major source of one-carbon groups required for the biosynthesis of purines, thymidylate, methionine, and other important biomolecules. Also exhibits THF-independent aldolase activity toward beta-hydroxyamino acids, producing glycine and aldehydes, via a retro-aldol mechanism.</text>
</comment>
<comment type="catalytic activity">
    <reaction evidence="1">
        <text>(6R)-5,10-methylene-5,6,7,8-tetrahydrofolate + glycine + H2O = (6S)-5,6,7,8-tetrahydrofolate + L-serine</text>
        <dbReference type="Rhea" id="RHEA:15481"/>
        <dbReference type="ChEBI" id="CHEBI:15377"/>
        <dbReference type="ChEBI" id="CHEBI:15636"/>
        <dbReference type="ChEBI" id="CHEBI:33384"/>
        <dbReference type="ChEBI" id="CHEBI:57305"/>
        <dbReference type="ChEBI" id="CHEBI:57453"/>
        <dbReference type="EC" id="2.1.2.1"/>
    </reaction>
</comment>
<comment type="cofactor">
    <cofactor evidence="1">
        <name>pyridoxal 5'-phosphate</name>
        <dbReference type="ChEBI" id="CHEBI:597326"/>
    </cofactor>
</comment>
<comment type="pathway">
    <text evidence="1">One-carbon metabolism; tetrahydrofolate interconversion.</text>
</comment>
<comment type="pathway">
    <text evidence="1">Amino-acid biosynthesis; glycine biosynthesis; glycine from L-serine: step 1/1.</text>
</comment>
<comment type="subunit">
    <text evidence="1">Homodimer.</text>
</comment>
<comment type="subcellular location">
    <subcellularLocation>
        <location evidence="1">Cytoplasm</location>
    </subcellularLocation>
</comment>
<comment type="similarity">
    <text evidence="1">Belongs to the SHMT family.</text>
</comment>
<keyword id="KW-0028">Amino-acid biosynthesis</keyword>
<keyword id="KW-0963">Cytoplasm</keyword>
<keyword id="KW-0554">One-carbon metabolism</keyword>
<keyword id="KW-0663">Pyridoxal phosphate</keyword>
<keyword id="KW-0808">Transferase</keyword>
<proteinExistence type="inferred from homology"/>
<accession>A2RIS0</accession>
<evidence type="ECO:0000255" key="1">
    <source>
        <dbReference type="HAMAP-Rule" id="MF_00051"/>
    </source>
</evidence>
<feature type="chain" id="PRO_1000006271" description="Serine hydroxymethyltransferase">
    <location>
        <begin position="1"/>
        <end position="415"/>
    </location>
</feature>
<feature type="binding site" evidence="1">
    <location>
        <position position="121"/>
    </location>
    <ligand>
        <name>(6S)-5,6,7,8-tetrahydrofolate</name>
        <dbReference type="ChEBI" id="CHEBI:57453"/>
    </ligand>
</feature>
<feature type="binding site" evidence="1">
    <location>
        <begin position="125"/>
        <end position="127"/>
    </location>
    <ligand>
        <name>(6S)-5,6,7,8-tetrahydrofolate</name>
        <dbReference type="ChEBI" id="CHEBI:57453"/>
    </ligand>
</feature>
<feature type="binding site" evidence="1">
    <location>
        <begin position="355"/>
        <end position="357"/>
    </location>
    <ligand>
        <name>(6S)-5,6,7,8-tetrahydrofolate</name>
        <dbReference type="ChEBI" id="CHEBI:57453"/>
    </ligand>
</feature>
<feature type="site" description="Plays an important role in substrate specificity" evidence="1">
    <location>
        <position position="229"/>
    </location>
</feature>
<feature type="modified residue" description="N6-(pyridoxal phosphate)lysine" evidence="1">
    <location>
        <position position="230"/>
    </location>
</feature>
<reference key="1">
    <citation type="journal article" date="2007" name="J. Bacteriol.">
        <title>The complete genome sequence of the lactic acid bacterial paradigm Lactococcus lactis subsp. cremoris MG1363.</title>
        <authorList>
            <person name="Wegmann U."/>
            <person name="O'Connell-Motherway M."/>
            <person name="Zomer A."/>
            <person name="Buist G."/>
            <person name="Shearman C."/>
            <person name="Canchaya C."/>
            <person name="Ventura M."/>
            <person name="Goesmann A."/>
            <person name="Gasson M.J."/>
            <person name="Kuipers O.P."/>
            <person name="van Sinderen D."/>
            <person name="Kok J."/>
        </authorList>
    </citation>
    <scope>NUCLEOTIDE SEQUENCE [LARGE SCALE GENOMIC DNA]</scope>
    <source>
        <strain>MG1363</strain>
    </source>
</reference>
<sequence>MIFDKEDFESFDPELWAAIHAEEIRQQQNIELIASENIVSKAVMAAQGSVLTNKYAEGYPGKRYYGGTEAVDVVENLAIDRAKELFGAKFANVQPHSGSQANAAAYMALIQPGDTVLGMDLNAGGHLTHGASVNFSGKTYHFVPYGVNPQTELLDYEEILKIAKEVQPKLIVAGASAYSRLIDFAKFRQIADSVGAKLMVDMAHIAGLVATGAHPNPLPYADVVTTTTHKTLRGPRGGMILTNDEVLAKKINSAIFPGTQGGPLEHVIAAKAVAFKEALDPEFATYIEQVIKNTQAMADEFAKVDGLRLIAGGSDNHLLNLKVLDLGINGKEAQDLLDSVHITLNKEAIPDETLSPFKTSGVRIGAAAITSRGFKEAEARKVAQLVSKALVNHDNQEKLEEVRKSALELTHQFPL</sequence>
<dbReference type="EC" id="2.1.2.1" evidence="1"/>
<dbReference type="EMBL" id="AM406671">
    <property type="protein sequence ID" value="CAL97165.1"/>
    <property type="molecule type" value="Genomic_DNA"/>
</dbReference>
<dbReference type="RefSeq" id="WP_011834589.1">
    <property type="nucleotide sequence ID" value="NC_009004.1"/>
</dbReference>
<dbReference type="SMR" id="A2RIS0"/>
<dbReference type="STRING" id="416870.llmg_0563"/>
<dbReference type="KEGG" id="llm:llmg_0563"/>
<dbReference type="eggNOG" id="COG0112">
    <property type="taxonomic scope" value="Bacteria"/>
</dbReference>
<dbReference type="HOGENOM" id="CLU_022477_2_1_9"/>
<dbReference type="OrthoDB" id="9803846at2"/>
<dbReference type="PhylomeDB" id="A2RIS0"/>
<dbReference type="UniPathway" id="UPA00193"/>
<dbReference type="UniPathway" id="UPA00288">
    <property type="reaction ID" value="UER01023"/>
</dbReference>
<dbReference type="Proteomes" id="UP000000364">
    <property type="component" value="Chromosome"/>
</dbReference>
<dbReference type="GO" id="GO:0005829">
    <property type="term" value="C:cytosol"/>
    <property type="evidence" value="ECO:0007669"/>
    <property type="project" value="TreeGrafter"/>
</dbReference>
<dbReference type="GO" id="GO:0004372">
    <property type="term" value="F:glycine hydroxymethyltransferase activity"/>
    <property type="evidence" value="ECO:0007669"/>
    <property type="project" value="UniProtKB-UniRule"/>
</dbReference>
<dbReference type="GO" id="GO:0030170">
    <property type="term" value="F:pyridoxal phosphate binding"/>
    <property type="evidence" value="ECO:0007669"/>
    <property type="project" value="UniProtKB-UniRule"/>
</dbReference>
<dbReference type="GO" id="GO:0019264">
    <property type="term" value="P:glycine biosynthetic process from serine"/>
    <property type="evidence" value="ECO:0007669"/>
    <property type="project" value="UniProtKB-UniRule"/>
</dbReference>
<dbReference type="GO" id="GO:0035999">
    <property type="term" value="P:tetrahydrofolate interconversion"/>
    <property type="evidence" value="ECO:0007669"/>
    <property type="project" value="UniProtKB-UniRule"/>
</dbReference>
<dbReference type="CDD" id="cd00378">
    <property type="entry name" value="SHMT"/>
    <property type="match status" value="1"/>
</dbReference>
<dbReference type="FunFam" id="3.40.640.10:FF:000001">
    <property type="entry name" value="Serine hydroxymethyltransferase"/>
    <property type="match status" value="1"/>
</dbReference>
<dbReference type="Gene3D" id="3.90.1150.10">
    <property type="entry name" value="Aspartate Aminotransferase, domain 1"/>
    <property type="match status" value="1"/>
</dbReference>
<dbReference type="Gene3D" id="3.40.640.10">
    <property type="entry name" value="Type I PLP-dependent aspartate aminotransferase-like (Major domain)"/>
    <property type="match status" value="1"/>
</dbReference>
<dbReference type="HAMAP" id="MF_00051">
    <property type="entry name" value="SHMT"/>
    <property type="match status" value="1"/>
</dbReference>
<dbReference type="InterPro" id="IPR015424">
    <property type="entry name" value="PyrdxlP-dep_Trfase"/>
</dbReference>
<dbReference type="InterPro" id="IPR015421">
    <property type="entry name" value="PyrdxlP-dep_Trfase_major"/>
</dbReference>
<dbReference type="InterPro" id="IPR015422">
    <property type="entry name" value="PyrdxlP-dep_Trfase_small"/>
</dbReference>
<dbReference type="InterPro" id="IPR001085">
    <property type="entry name" value="Ser_HO-MeTrfase"/>
</dbReference>
<dbReference type="InterPro" id="IPR049943">
    <property type="entry name" value="Ser_HO-MeTrfase-like"/>
</dbReference>
<dbReference type="InterPro" id="IPR019798">
    <property type="entry name" value="Ser_HO-MeTrfase_PLP_BS"/>
</dbReference>
<dbReference type="InterPro" id="IPR039429">
    <property type="entry name" value="SHMT-like_dom"/>
</dbReference>
<dbReference type="NCBIfam" id="NF000586">
    <property type="entry name" value="PRK00011.1"/>
    <property type="match status" value="1"/>
</dbReference>
<dbReference type="PANTHER" id="PTHR11680">
    <property type="entry name" value="SERINE HYDROXYMETHYLTRANSFERASE"/>
    <property type="match status" value="1"/>
</dbReference>
<dbReference type="PANTHER" id="PTHR11680:SF35">
    <property type="entry name" value="SERINE HYDROXYMETHYLTRANSFERASE 1"/>
    <property type="match status" value="1"/>
</dbReference>
<dbReference type="Pfam" id="PF00464">
    <property type="entry name" value="SHMT"/>
    <property type="match status" value="1"/>
</dbReference>
<dbReference type="PIRSF" id="PIRSF000412">
    <property type="entry name" value="SHMT"/>
    <property type="match status" value="1"/>
</dbReference>
<dbReference type="SUPFAM" id="SSF53383">
    <property type="entry name" value="PLP-dependent transferases"/>
    <property type="match status" value="1"/>
</dbReference>
<dbReference type="PROSITE" id="PS00096">
    <property type="entry name" value="SHMT"/>
    <property type="match status" value="1"/>
</dbReference>
<name>GLYA_LACLM</name>
<organism>
    <name type="scientific">Lactococcus lactis subsp. cremoris (strain MG1363)</name>
    <dbReference type="NCBI Taxonomy" id="416870"/>
    <lineage>
        <taxon>Bacteria</taxon>
        <taxon>Bacillati</taxon>
        <taxon>Bacillota</taxon>
        <taxon>Bacilli</taxon>
        <taxon>Lactobacillales</taxon>
        <taxon>Streptococcaceae</taxon>
        <taxon>Lactococcus</taxon>
        <taxon>Lactococcus cremoris subsp. cremoris</taxon>
    </lineage>
</organism>
<gene>
    <name evidence="1" type="primary">glyA</name>
    <name type="ordered locus">llmg_0563</name>
</gene>
<protein>
    <recommendedName>
        <fullName evidence="1">Serine hydroxymethyltransferase</fullName>
        <shortName evidence="1">SHMT</shortName>
        <shortName evidence="1">Serine methylase</shortName>
        <ecNumber evidence="1">2.1.2.1</ecNumber>
    </recommendedName>
</protein>